<comment type="function">
    <text evidence="1">Tetrapolymerization of the monopyrrole PBG into the hydroxymethylbilane pre-uroporphyrinogen in several discrete steps.</text>
</comment>
<comment type="catalytic activity">
    <reaction evidence="1">
        <text>4 porphobilinogen + H2O = hydroxymethylbilane + 4 NH4(+)</text>
        <dbReference type="Rhea" id="RHEA:13185"/>
        <dbReference type="ChEBI" id="CHEBI:15377"/>
        <dbReference type="ChEBI" id="CHEBI:28938"/>
        <dbReference type="ChEBI" id="CHEBI:57845"/>
        <dbReference type="ChEBI" id="CHEBI:58126"/>
        <dbReference type="EC" id="2.5.1.61"/>
    </reaction>
</comment>
<comment type="cofactor">
    <cofactor evidence="1">
        <name>dipyrromethane</name>
        <dbReference type="ChEBI" id="CHEBI:60342"/>
    </cofactor>
    <text evidence="1">Binds 1 dipyrromethane group covalently.</text>
</comment>
<comment type="pathway">
    <text evidence="1">Porphyrin-containing compound metabolism; protoporphyrin-IX biosynthesis; coproporphyrinogen-III from 5-aminolevulinate: step 2/4.</text>
</comment>
<comment type="pathway">
    <text evidence="1">Porphyrin-containing compound metabolism; chlorophyll biosynthesis.</text>
</comment>
<comment type="subunit">
    <text evidence="1">Monomer.</text>
</comment>
<comment type="miscellaneous">
    <text evidence="1">The porphobilinogen subunits are added to the dipyrromethane group.</text>
</comment>
<comment type="similarity">
    <text evidence="1">Belongs to the HMBS family.</text>
</comment>
<keyword id="KW-0149">Chlorophyll biosynthesis</keyword>
<keyword id="KW-0627">Porphyrin biosynthesis</keyword>
<keyword id="KW-1185">Reference proteome</keyword>
<keyword id="KW-0808">Transferase</keyword>
<reference key="1">
    <citation type="journal article" date="2003" name="DNA Res.">
        <title>Complete genome structure of Gloeobacter violaceus PCC 7421, a cyanobacterium that lacks thylakoids.</title>
        <authorList>
            <person name="Nakamura Y."/>
            <person name="Kaneko T."/>
            <person name="Sato S."/>
            <person name="Mimuro M."/>
            <person name="Miyashita H."/>
            <person name="Tsuchiya T."/>
            <person name="Sasamoto S."/>
            <person name="Watanabe A."/>
            <person name="Kawashima K."/>
            <person name="Kishida Y."/>
            <person name="Kiyokawa C."/>
            <person name="Kohara M."/>
            <person name="Matsumoto M."/>
            <person name="Matsuno A."/>
            <person name="Nakazaki N."/>
            <person name="Shimpo S."/>
            <person name="Takeuchi C."/>
            <person name="Yamada M."/>
            <person name="Tabata S."/>
        </authorList>
    </citation>
    <scope>NUCLEOTIDE SEQUENCE [LARGE SCALE GENOMIC DNA]</scope>
    <source>
        <strain>ATCC 29082 / PCC 7421</strain>
    </source>
</reference>
<feature type="chain" id="PRO_0000142943" description="Porphobilinogen deaminase">
    <location>
        <begin position="1"/>
        <end position="328"/>
    </location>
</feature>
<feature type="modified residue" description="S-(dipyrrolylmethanemethyl)cysteine" evidence="1">
    <location>
        <position position="245"/>
    </location>
</feature>
<protein>
    <recommendedName>
        <fullName evidence="1">Porphobilinogen deaminase</fullName>
        <shortName evidence="1">PBG</shortName>
        <ecNumber evidence="1">2.5.1.61</ecNumber>
    </recommendedName>
    <alternativeName>
        <fullName evidence="1">Hydroxymethylbilane synthase</fullName>
        <shortName evidence="1">HMBS</shortName>
    </alternativeName>
    <alternativeName>
        <fullName evidence="1">Pre-uroporphyrinogen synthase</fullName>
    </alternativeName>
</protein>
<name>HEM3_GLOVI</name>
<evidence type="ECO:0000255" key="1">
    <source>
        <dbReference type="HAMAP-Rule" id="MF_00260"/>
    </source>
</evidence>
<sequence>MSRTVIIGSRDSQLALVQTHWVRDELQRAHPDIRFEIVEMKTQGDKILDVALAKIGDKGLFTKELESAMLEKRTDLAVHSLKDLPTALPPGLILGAITEREDPSDAVIVRRGLEAAGLADLPEGAVVGTSSLRRLAQLKHHYGERLRFQDIRGNLNTRLRKLDEGRYDAIVLAVAGMRRLGWSERISEVLSPDISLHAVGQGALGIECREADGEILDLLTVLNHPPTARRCRAERAMLRALEGGCQVPIGVYTELDDSGRLTLQGIVASLDGRNMARACRSGPGDAPEALGRAVAEDLKAAGAQAILDQIFVLVRSPGVIAPGAAPAS</sequence>
<accession>Q7NGF7</accession>
<gene>
    <name evidence="1" type="primary">hemC</name>
    <name type="ordered locus">glr3212</name>
</gene>
<proteinExistence type="inferred from homology"/>
<dbReference type="EC" id="2.5.1.61" evidence="1"/>
<dbReference type="EMBL" id="BA000045">
    <property type="protein sequence ID" value="BAC91153.1"/>
    <property type="molecule type" value="Genomic_DNA"/>
</dbReference>
<dbReference type="RefSeq" id="NP_926158.1">
    <property type="nucleotide sequence ID" value="NC_005125.1"/>
</dbReference>
<dbReference type="RefSeq" id="WP_011143204.1">
    <property type="nucleotide sequence ID" value="NC_005125.1"/>
</dbReference>
<dbReference type="SMR" id="Q7NGF7"/>
<dbReference type="FunCoup" id="Q7NGF7">
    <property type="interactions" value="396"/>
</dbReference>
<dbReference type="STRING" id="251221.gene:10760720"/>
<dbReference type="EnsemblBacteria" id="BAC91153">
    <property type="protein sequence ID" value="BAC91153"/>
    <property type="gene ID" value="BAC91153"/>
</dbReference>
<dbReference type="KEGG" id="gvi:glr3212"/>
<dbReference type="PATRIC" id="fig|251221.4.peg.3243"/>
<dbReference type="eggNOG" id="COG0181">
    <property type="taxonomic scope" value="Bacteria"/>
</dbReference>
<dbReference type="HOGENOM" id="CLU_019704_0_2_3"/>
<dbReference type="InParanoid" id="Q7NGF7"/>
<dbReference type="OrthoDB" id="9810298at2"/>
<dbReference type="PhylomeDB" id="Q7NGF7"/>
<dbReference type="UniPathway" id="UPA00251">
    <property type="reaction ID" value="UER00319"/>
</dbReference>
<dbReference type="UniPathway" id="UPA00668"/>
<dbReference type="Proteomes" id="UP000000557">
    <property type="component" value="Chromosome"/>
</dbReference>
<dbReference type="GO" id="GO:0005737">
    <property type="term" value="C:cytoplasm"/>
    <property type="evidence" value="ECO:0000318"/>
    <property type="project" value="GO_Central"/>
</dbReference>
<dbReference type="GO" id="GO:0004418">
    <property type="term" value="F:hydroxymethylbilane synthase activity"/>
    <property type="evidence" value="ECO:0000318"/>
    <property type="project" value="GO_Central"/>
</dbReference>
<dbReference type="GO" id="GO:0015995">
    <property type="term" value="P:chlorophyll biosynthetic process"/>
    <property type="evidence" value="ECO:0007669"/>
    <property type="project" value="UniProtKB-UniRule"/>
</dbReference>
<dbReference type="GO" id="GO:0006783">
    <property type="term" value="P:heme biosynthetic process"/>
    <property type="evidence" value="ECO:0000318"/>
    <property type="project" value="GO_Central"/>
</dbReference>
<dbReference type="GO" id="GO:0006782">
    <property type="term" value="P:protoporphyrinogen IX biosynthetic process"/>
    <property type="evidence" value="ECO:0007669"/>
    <property type="project" value="UniProtKB-UniRule"/>
</dbReference>
<dbReference type="CDD" id="cd13645">
    <property type="entry name" value="PBP2_HuPBGD_like"/>
    <property type="match status" value="1"/>
</dbReference>
<dbReference type="FunFam" id="3.30.160.40:FF:000002">
    <property type="entry name" value="Porphobilinogen deaminase"/>
    <property type="match status" value="1"/>
</dbReference>
<dbReference type="FunFam" id="3.40.190.10:FF:000004">
    <property type="entry name" value="Porphobilinogen deaminase"/>
    <property type="match status" value="1"/>
</dbReference>
<dbReference type="FunFam" id="3.40.190.10:FF:000005">
    <property type="entry name" value="Porphobilinogen deaminase"/>
    <property type="match status" value="1"/>
</dbReference>
<dbReference type="Gene3D" id="3.40.190.10">
    <property type="entry name" value="Periplasmic binding protein-like II"/>
    <property type="match status" value="2"/>
</dbReference>
<dbReference type="Gene3D" id="3.30.160.40">
    <property type="entry name" value="Porphobilinogen deaminase, C-terminal domain"/>
    <property type="match status" value="1"/>
</dbReference>
<dbReference type="HAMAP" id="MF_00260">
    <property type="entry name" value="Porphobil_deam"/>
    <property type="match status" value="1"/>
</dbReference>
<dbReference type="InterPro" id="IPR000860">
    <property type="entry name" value="HemC"/>
</dbReference>
<dbReference type="InterPro" id="IPR022419">
    <property type="entry name" value="Porphobilin_deaminase_cofac_BS"/>
</dbReference>
<dbReference type="InterPro" id="IPR022417">
    <property type="entry name" value="Porphobilin_deaminase_N"/>
</dbReference>
<dbReference type="InterPro" id="IPR022418">
    <property type="entry name" value="Porphobilinogen_deaminase_C"/>
</dbReference>
<dbReference type="InterPro" id="IPR036803">
    <property type="entry name" value="Porphobilinogen_deaminase_C_sf"/>
</dbReference>
<dbReference type="NCBIfam" id="TIGR00212">
    <property type="entry name" value="hemC"/>
    <property type="match status" value="1"/>
</dbReference>
<dbReference type="PANTHER" id="PTHR11557">
    <property type="entry name" value="PORPHOBILINOGEN DEAMINASE"/>
    <property type="match status" value="1"/>
</dbReference>
<dbReference type="PANTHER" id="PTHR11557:SF0">
    <property type="entry name" value="PORPHOBILINOGEN DEAMINASE"/>
    <property type="match status" value="1"/>
</dbReference>
<dbReference type="Pfam" id="PF01379">
    <property type="entry name" value="Porphobil_deam"/>
    <property type="match status" value="1"/>
</dbReference>
<dbReference type="Pfam" id="PF03900">
    <property type="entry name" value="Porphobil_deamC"/>
    <property type="match status" value="1"/>
</dbReference>
<dbReference type="PIRSF" id="PIRSF001438">
    <property type="entry name" value="4pyrrol_synth_OHMeBilane_synth"/>
    <property type="match status" value="1"/>
</dbReference>
<dbReference type="PRINTS" id="PR00151">
    <property type="entry name" value="PORPHBDMNASE"/>
</dbReference>
<dbReference type="SUPFAM" id="SSF53850">
    <property type="entry name" value="Periplasmic binding protein-like II"/>
    <property type="match status" value="1"/>
</dbReference>
<dbReference type="SUPFAM" id="SSF54782">
    <property type="entry name" value="Porphobilinogen deaminase (hydroxymethylbilane synthase), C-terminal domain"/>
    <property type="match status" value="1"/>
</dbReference>
<dbReference type="PROSITE" id="PS00533">
    <property type="entry name" value="PORPHOBILINOGEN_DEAM"/>
    <property type="match status" value="1"/>
</dbReference>
<organism>
    <name type="scientific">Gloeobacter violaceus (strain ATCC 29082 / PCC 7421)</name>
    <dbReference type="NCBI Taxonomy" id="251221"/>
    <lineage>
        <taxon>Bacteria</taxon>
        <taxon>Bacillati</taxon>
        <taxon>Cyanobacteriota</taxon>
        <taxon>Cyanophyceae</taxon>
        <taxon>Gloeobacterales</taxon>
        <taxon>Gloeobacteraceae</taxon>
        <taxon>Gloeobacter</taxon>
    </lineage>
</organism>